<feature type="chain" id="PRO_0000336064" description="Protein PROCA1">
    <location>
        <begin position="1"/>
        <end position="307"/>
    </location>
</feature>
<feature type="region of interest" description="Disordered" evidence="2">
    <location>
        <begin position="134"/>
        <end position="155"/>
    </location>
</feature>
<feature type="region of interest" description="Disordered" evidence="2">
    <location>
        <begin position="183"/>
        <end position="307"/>
    </location>
</feature>
<feature type="compositionally biased region" description="Basic residues" evidence="2">
    <location>
        <begin position="200"/>
        <end position="214"/>
    </location>
</feature>
<feature type="compositionally biased region" description="Polar residues" evidence="2">
    <location>
        <begin position="216"/>
        <end position="228"/>
    </location>
</feature>
<feature type="compositionally biased region" description="Low complexity" evidence="2">
    <location>
        <begin position="235"/>
        <end position="248"/>
    </location>
</feature>
<feature type="compositionally biased region" description="Basic and acidic residues" evidence="2">
    <location>
        <begin position="250"/>
        <end position="260"/>
    </location>
</feature>
<feature type="modified residue" description="Phosphoserine" evidence="1">
    <location>
        <position position="220"/>
    </location>
</feature>
<feature type="modified residue" description="Phosphoserine" evidence="1">
    <location>
        <position position="250"/>
    </location>
</feature>
<feature type="modified residue" description="Phosphoserine" evidence="1">
    <location>
        <position position="259"/>
    </location>
</feature>
<feature type="modified residue" description="Phosphoserine" evidence="1">
    <location>
        <position position="260"/>
    </location>
</feature>
<feature type="modified residue" description="Phosphoserine" evidence="1">
    <location>
        <position position="298"/>
    </location>
</feature>
<feature type="modified residue" description="Phosphoserine" evidence="1">
    <location>
        <position position="307"/>
    </location>
</feature>
<reference key="1">
    <citation type="journal article" date="2009" name="PLoS Biol.">
        <title>Lineage-specific biology revealed by a finished genome assembly of the mouse.</title>
        <authorList>
            <person name="Church D.M."/>
            <person name="Goodstadt L."/>
            <person name="Hillier L.W."/>
            <person name="Zody M.C."/>
            <person name="Goldstein S."/>
            <person name="She X."/>
            <person name="Bult C.J."/>
            <person name="Agarwala R."/>
            <person name="Cherry J.L."/>
            <person name="DiCuccio M."/>
            <person name="Hlavina W."/>
            <person name="Kapustin Y."/>
            <person name="Meric P."/>
            <person name="Maglott D."/>
            <person name="Birtle Z."/>
            <person name="Marques A.C."/>
            <person name="Graves T."/>
            <person name="Zhou S."/>
            <person name="Teague B."/>
            <person name="Potamousis K."/>
            <person name="Churas C."/>
            <person name="Place M."/>
            <person name="Herschleb J."/>
            <person name="Runnheim R."/>
            <person name="Forrest D."/>
            <person name="Amos-Landgraf J."/>
            <person name="Schwartz D.C."/>
            <person name="Cheng Z."/>
            <person name="Lindblad-Toh K."/>
            <person name="Eichler E.E."/>
            <person name="Ponting C.P."/>
        </authorList>
    </citation>
    <scope>NUCLEOTIDE SEQUENCE [LARGE SCALE GENOMIC DNA]</scope>
    <source>
        <strain>C57BL/6J</strain>
    </source>
</reference>
<name>PRCA1_MOUSE</name>
<sequence>MWVRTTITVKRWTEERSGRKIERTERTDITRLPSWKRGYPASVDSSSDLFSFSEGENKETDRRCWKHQHCPGHTIHPFSDCGHHNRCMHAVSQCDCESRCRSHRPVSVAIIYHPTHHMYMTDDDLEENWVSRKNHLSPSARPPDPNTGSATEVPDLSVPITIWRSESPIEKCQESNVIKDIKRKEKEQDEEEMVDEKANLKKKAKGKLTKKKTPVKSESSPADLSQSVRGPVRTPESSPESPGGLESEYSCERGKERPSSEDVVESLSPRKKEKTSSGQAKKNGTKKETQKTSKRKKSSPVPNPNLS</sequence>
<dbReference type="EMBL" id="AL591070">
    <property type="status" value="NOT_ANNOTATED_CDS"/>
    <property type="molecule type" value="Genomic_DNA"/>
</dbReference>
<dbReference type="CCDS" id="CCDS88201.1"/>
<dbReference type="RefSeq" id="NP_001355805.1">
    <property type="nucleotide sequence ID" value="NM_001368876.1"/>
</dbReference>
<dbReference type="RefSeq" id="XP_006533026.1">
    <property type="nucleotide sequence ID" value="XM_006532963.3"/>
</dbReference>
<dbReference type="STRING" id="10090.ENSMUSP00000086022"/>
<dbReference type="iPTMnet" id="B0QZF7"/>
<dbReference type="PhosphoSitePlus" id="B0QZF7"/>
<dbReference type="PaxDb" id="10090-ENSMUSP00000086022"/>
<dbReference type="ProteomicsDB" id="289398"/>
<dbReference type="Antibodypedia" id="14279">
    <property type="antibodies" value="71 antibodies from 13 providers"/>
</dbReference>
<dbReference type="Ensembl" id="ENSMUST00000108317.3">
    <property type="protein sequence ID" value="ENSMUSP00000103953.3"/>
    <property type="gene ID" value="ENSMUSG00000044122.16"/>
</dbReference>
<dbReference type="GeneID" id="216974"/>
<dbReference type="UCSC" id="uc007kin.1">
    <property type="organism name" value="mouse"/>
</dbReference>
<dbReference type="AGR" id="MGI:1918274"/>
<dbReference type="MGI" id="MGI:1918274">
    <property type="gene designation" value="Proca1"/>
</dbReference>
<dbReference type="VEuPathDB" id="HostDB:ENSMUSG00000044122"/>
<dbReference type="eggNOG" id="ENOG502QTYI">
    <property type="taxonomic scope" value="Eukaryota"/>
</dbReference>
<dbReference type="GeneTree" id="ENSGT00940000162235"/>
<dbReference type="HOGENOM" id="CLU_803998_0_0_1"/>
<dbReference type="InParanoid" id="B0QZF7"/>
<dbReference type="OMA" id="IHPFSDC"/>
<dbReference type="OrthoDB" id="6075074at2759"/>
<dbReference type="BioGRID-ORCS" id="216974">
    <property type="hits" value="2 hits in 77 CRISPR screens"/>
</dbReference>
<dbReference type="ChiTaRS" id="Proca1">
    <property type="organism name" value="mouse"/>
</dbReference>
<dbReference type="PRO" id="PR:B0QZF7"/>
<dbReference type="Proteomes" id="UP000000589">
    <property type="component" value="Chromosome 11"/>
</dbReference>
<dbReference type="RNAct" id="B0QZF7">
    <property type="molecule type" value="protein"/>
</dbReference>
<dbReference type="Bgee" id="ENSMUSG00000044122">
    <property type="expression patterns" value="Expressed in seminiferous tubule of testis and 138 other cell types or tissues"/>
</dbReference>
<dbReference type="ExpressionAtlas" id="B0QZF7">
    <property type="expression patterns" value="baseline and differential"/>
</dbReference>
<dbReference type="GO" id="GO:0005739">
    <property type="term" value="C:mitochondrion"/>
    <property type="evidence" value="ECO:0000250"/>
    <property type="project" value="UniProtKB"/>
</dbReference>
<dbReference type="GO" id="GO:0004623">
    <property type="term" value="F:phospholipase A2 activity"/>
    <property type="evidence" value="ECO:0007669"/>
    <property type="project" value="InterPro"/>
</dbReference>
<dbReference type="GO" id="GO:0050482">
    <property type="term" value="P:arachidonate secretion"/>
    <property type="evidence" value="ECO:0007669"/>
    <property type="project" value="InterPro"/>
</dbReference>
<dbReference type="GO" id="GO:0035694">
    <property type="term" value="P:mitochondrial protein catabolic process"/>
    <property type="evidence" value="ECO:0000250"/>
    <property type="project" value="UniProtKB"/>
</dbReference>
<dbReference type="GO" id="GO:0141164">
    <property type="term" value="P:mitochondrial protein quality control"/>
    <property type="evidence" value="ECO:0000250"/>
    <property type="project" value="UniProtKB"/>
</dbReference>
<dbReference type="GO" id="GO:0007005">
    <property type="term" value="P:mitochondrion organization"/>
    <property type="evidence" value="ECO:0000250"/>
    <property type="project" value="UniProtKB"/>
</dbReference>
<dbReference type="GO" id="GO:0006644">
    <property type="term" value="P:phospholipid metabolic process"/>
    <property type="evidence" value="ECO:0007669"/>
    <property type="project" value="InterPro"/>
</dbReference>
<dbReference type="CDD" id="cd04705">
    <property type="entry name" value="PLA2_group_III_like"/>
    <property type="match status" value="1"/>
</dbReference>
<dbReference type="Gene3D" id="1.20.90.10">
    <property type="entry name" value="Phospholipase A2 domain"/>
    <property type="match status" value="1"/>
</dbReference>
<dbReference type="InterPro" id="IPR036444">
    <property type="entry name" value="PLipase_A2_dom_sf"/>
</dbReference>
<dbReference type="PANTHER" id="PTHR12253">
    <property type="entry name" value="RH14732P"/>
    <property type="match status" value="1"/>
</dbReference>
<gene>
    <name type="primary">Proca1</name>
</gene>
<keyword id="KW-0597">Phosphoprotein</keyword>
<keyword id="KW-1185">Reference proteome</keyword>
<evidence type="ECO:0000250" key="1">
    <source>
        <dbReference type="UniProtKB" id="Q4V7B4"/>
    </source>
</evidence>
<evidence type="ECO:0000256" key="2">
    <source>
        <dbReference type="SAM" id="MobiDB-lite"/>
    </source>
</evidence>
<evidence type="ECO:0000305" key="3"/>
<proteinExistence type="inferred from homology"/>
<protein>
    <recommendedName>
        <fullName>Protein PROCA1</fullName>
    </recommendedName>
</protein>
<organism>
    <name type="scientific">Mus musculus</name>
    <name type="common">Mouse</name>
    <dbReference type="NCBI Taxonomy" id="10090"/>
    <lineage>
        <taxon>Eukaryota</taxon>
        <taxon>Metazoa</taxon>
        <taxon>Chordata</taxon>
        <taxon>Craniata</taxon>
        <taxon>Vertebrata</taxon>
        <taxon>Euteleostomi</taxon>
        <taxon>Mammalia</taxon>
        <taxon>Eutheria</taxon>
        <taxon>Euarchontoglires</taxon>
        <taxon>Glires</taxon>
        <taxon>Rodentia</taxon>
        <taxon>Myomorpha</taxon>
        <taxon>Muroidea</taxon>
        <taxon>Muridae</taxon>
        <taxon>Murinae</taxon>
        <taxon>Mus</taxon>
        <taxon>Mus</taxon>
    </lineage>
</organism>
<accession>B0QZF7</accession>
<comment type="similarity">
    <text evidence="3">Belongs to the PROCA1 family.</text>
</comment>